<sequence>MLSGILGWGAYVPRYRIKVEDIAKMWGYDEGVVRSLGLTEKSVPGHDEDSTTIAWESSINAIKRAQVDPSKIRLVLFGSESKVYAVKPTSTILIDALGINNYSATADMEFACRAASVGLRLASSFVLHNSDSYALVIGADTAQSNPGDVLELSSAAAGVAFVVGNVDEKHSAAVIEYSSSYTSDTPDFWRRDGTPYPVHGEGFTGEPAYFHHIISAVSDLLQNSGLKISDFDYFVFHQPNGKFPIQVAKKLGVPLEKVKQGLVSPYIGNPYNASALLGLAKVLDIAKPGERILVAPFGSGAGSDAFSILVSEGILEKQKLAKTVEYYINNKKLVSYAEYAKYTNKIKVYE</sequence>
<protein>
    <recommendedName>
        <fullName evidence="1">Hydroxymethylglutaryl-CoA synthase</fullName>
        <shortName evidence="1">HMG-CoA synthase</shortName>
        <shortName evidence="1">HMGCS</shortName>
        <ecNumber evidence="1">2.3.3.10</ecNumber>
    </recommendedName>
</protein>
<keyword id="KW-0012">Acyltransferase</keyword>
<keyword id="KW-0414">Isoprene biosynthesis</keyword>
<keyword id="KW-0808">Transferase</keyword>
<gene>
    <name type="ordered locus">M164_1584</name>
</gene>
<feature type="chain" id="PRO_1000215214" description="Hydroxymethylglutaryl-CoA synthase">
    <location>
        <begin position="1"/>
        <end position="350"/>
    </location>
</feature>
<feature type="active site" description="Proton donor/acceptor" evidence="1">
    <location>
        <position position="80"/>
    </location>
</feature>
<feature type="active site" description="Acyl-thioester intermediate" evidence="1">
    <location>
        <position position="112"/>
    </location>
</feature>
<feature type="active site" description="Proton donor/acceptor" evidence="1">
    <location>
        <position position="237"/>
    </location>
</feature>
<feature type="binding site" evidence="1">
    <location>
        <position position="29"/>
    </location>
    <ligand>
        <name>(3S)-3-hydroxy-3-methylglutaryl-CoA</name>
        <dbReference type="ChEBI" id="CHEBI:43074"/>
    </ligand>
</feature>
<feature type="binding site" evidence="1">
    <location>
        <position position="112"/>
    </location>
    <ligand>
        <name>(3S)-3-hydroxy-3-methylglutaryl-CoA</name>
        <dbReference type="ChEBI" id="CHEBI:43074"/>
    </ligand>
</feature>
<feature type="binding site" evidence="1">
    <location>
        <position position="153"/>
    </location>
    <ligand>
        <name>(3S)-3-hydroxy-3-methylglutaryl-CoA</name>
        <dbReference type="ChEBI" id="CHEBI:43074"/>
    </ligand>
</feature>
<feature type="binding site" evidence="1">
    <location>
        <position position="204"/>
    </location>
    <ligand>
        <name>(3S)-3-hydroxy-3-methylglutaryl-CoA</name>
        <dbReference type="ChEBI" id="CHEBI:43074"/>
    </ligand>
</feature>
<feature type="binding site" evidence="1">
    <location>
        <position position="237"/>
    </location>
    <ligand>
        <name>(3S)-3-hydroxy-3-methylglutaryl-CoA</name>
        <dbReference type="ChEBI" id="CHEBI:43074"/>
    </ligand>
</feature>
<feature type="binding site" evidence="1">
    <location>
        <position position="242"/>
    </location>
    <ligand>
        <name>CoA</name>
        <dbReference type="ChEBI" id="CHEBI:57287"/>
        <note>ligand shared with acetoacetyl-CoA thiolase</note>
    </ligand>
</feature>
<feature type="binding site" evidence="1">
    <location>
        <position position="269"/>
    </location>
    <ligand>
        <name>(3S)-3-hydroxy-3-methylglutaryl-CoA</name>
        <dbReference type="ChEBI" id="CHEBI:43074"/>
    </ligand>
</feature>
<feature type="binding site" evidence="1">
    <location>
        <position position="299"/>
    </location>
    <ligand>
        <name>(3S)-3-hydroxy-3-methylglutaryl-CoA</name>
        <dbReference type="ChEBI" id="CHEBI:43074"/>
    </ligand>
</feature>
<comment type="function">
    <text evidence="1">Catalyzes the condensation of acetyl-CoA with acetoacetyl-CoA to form 3-hydroxy-3-methylglutaryl-CoA (HMG-CoA). Functions in the mevalonate (MVA) pathway leading to isopentenyl diphosphate (IPP), a key precursor for the biosynthesis of isoprenoid compounds that are building blocks of archaeal membrane lipids.</text>
</comment>
<comment type="catalytic activity">
    <reaction evidence="1">
        <text>acetoacetyl-CoA + acetyl-CoA + H2O = (3S)-3-hydroxy-3-methylglutaryl-CoA + CoA + H(+)</text>
        <dbReference type="Rhea" id="RHEA:10188"/>
        <dbReference type="ChEBI" id="CHEBI:15377"/>
        <dbReference type="ChEBI" id="CHEBI:15378"/>
        <dbReference type="ChEBI" id="CHEBI:43074"/>
        <dbReference type="ChEBI" id="CHEBI:57286"/>
        <dbReference type="ChEBI" id="CHEBI:57287"/>
        <dbReference type="ChEBI" id="CHEBI:57288"/>
        <dbReference type="EC" id="2.3.3.10"/>
    </reaction>
    <physiologicalReaction direction="left-to-right" evidence="1">
        <dbReference type="Rhea" id="RHEA:10189"/>
    </physiologicalReaction>
</comment>
<comment type="pathway">
    <text evidence="1">Metabolic intermediate biosynthesis; (R)-mevalonate biosynthesis; (R)-mevalonate from acetyl-CoA: step 2/3.</text>
</comment>
<comment type="subunit">
    <text evidence="1">Interacts with acetoacetyl-CoA thiolase that catalyzes the precedent step in the pathway and with a DUF35 protein. The acetoacetyl-CoA thiolase/HMG-CoA synthase complex channels the intermediate via a fused CoA-binding site, which allows for efficient coupling of the endergonic thiolase reaction with the exergonic HMGCS reaction.</text>
</comment>
<comment type="similarity">
    <text evidence="1">Belongs to the thiolase-like superfamily. Archaeal HMG-CoA synthase family.</text>
</comment>
<evidence type="ECO:0000255" key="1">
    <source>
        <dbReference type="HAMAP-Rule" id="MF_01409"/>
    </source>
</evidence>
<name>HMGCS_SACI6</name>
<reference key="1">
    <citation type="journal article" date="2009" name="Proc. Natl. Acad. Sci. U.S.A.">
        <title>Biogeography of the Sulfolobus islandicus pan-genome.</title>
        <authorList>
            <person name="Reno M.L."/>
            <person name="Held N.L."/>
            <person name="Fields C.J."/>
            <person name="Burke P.V."/>
            <person name="Whitaker R.J."/>
        </authorList>
    </citation>
    <scope>NUCLEOTIDE SEQUENCE [LARGE SCALE GENOMIC DNA]</scope>
    <source>
        <strain>M.16.4 / Kamchatka #3</strain>
    </source>
</reference>
<accession>C4KHX1</accession>
<proteinExistence type="inferred from homology"/>
<organism>
    <name type="scientific">Saccharolobus islandicus (strain M.16.4 / Kamchatka #3)</name>
    <name type="common">Sulfolobus islandicus</name>
    <dbReference type="NCBI Taxonomy" id="426118"/>
    <lineage>
        <taxon>Archaea</taxon>
        <taxon>Thermoproteota</taxon>
        <taxon>Thermoprotei</taxon>
        <taxon>Sulfolobales</taxon>
        <taxon>Sulfolobaceae</taxon>
        <taxon>Saccharolobus</taxon>
    </lineage>
</organism>
<dbReference type="EC" id="2.3.3.10" evidence="1"/>
<dbReference type="EMBL" id="CP001402">
    <property type="protein sequence ID" value="ACR42185.1"/>
    <property type="molecule type" value="Genomic_DNA"/>
</dbReference>
<dbReference type="RefSeq" id="WP_012711580.1">
    <property type="nucleotide sequence ID" value="NC_012726.1"/>
</dbReference>
<dbReference type="SMR" id="C4KHX1"/>
<dbReference type="KEGG" id="sid:M164_1584"/>
<dbReference type="HOGENOM" id="CLU_039592_7_0_2"/>
<dbReference type="UniPathway" id="UPA00058">
    <property type="reaction ID" value="UER00102"/>
</dbReference>
<dbReference type="Proteomes" id="UP000001479">
    <property type="component" value="Chromosome"/>
</dbReference>
<dbReference type="GO" id="GO:0003985">
    <property type="term" value="F:acetyl-CoA C-acetyltransferase activity"/>
    <property type="evidence" value="ECO:0007669"/>
    <property type="project" value="UniProtKB-UniRule"/>
</dbReference>
<dbReference type="GO" id="GO:0004421">
    <property type="term" value="F:hydroxymethylglutaryl-CoA synthase activity"/>
    <property type="evidence" value="ECO:0007669"/>
    <property type="project" value="InterPro"/>
</dbReference>
<dbReference type="GO" id="GO:0010142">
    <property type="term" value="P:farnesyl diphosphate biosynthetic process, mevalonate pathway"/>
    <property type="evidence" value="ECO:0007669"/>
    <property type="project" value="TreeGrafter"/>
</dbReference>
<dbReference type="GO" id="GO:0019287">
    <property type="term" value="P:isopentenyl diphosphate biosynthetic process, mevalonate pathway"/>
    <property type="evidence" value="ECO:0007669"/>
    <property type="project" value="UniProtKB-UniRule"/>
</dbReference>
<dbReference type="CDD" id="cd00827">
    <property type="entry name" value="init_cond_enzymes"/>
    <property type="match status" value="1"/>
</dbReference>
<dbReference type="FunFam" id="3.40.47.10:FF:000046">
    <property type="entry name" value="UPF0219 protein M1627_1703"/>
    <property type="match status" value="1"/>
</dbReference>
<dbReference type="Gene3D" id="3.40.47.10">
    <property type="match status" value="1"/>
</dbReference>
<dbReference type="HAMAP" id="MF_01409">
    <property type="entry name" value="HMG_CoA_synth_arch"/>
    <property type="match status" value="1"/>
</dbReference>
<dbReference type="InterPro" id="IPR013747">
    <property type="entry name" value="ACP_syn_III_C"/>
</dbReference>
<dbReference type="InterPro" id="IPR004656">
    <property type="entry name" value="HMG_CoA_Synthase"/>
</dbReference>
<dbReference type="InterPro" id="IPR016039">
    <property type="entry name" value="Thiolase-like"/>
</dbReference>
<dbReference type="NCBIfam" id="TIGR00748">
    <property type="entry name" value="HMG_CoA_syn_Arc"/>
    <property type="match status" value="1"/>
</dbReference>
<dbReference type="NCBIfam" id="NF003274">
    <property type="entry name" value="PRK04262.1"/>
    <property type="match status" value="1"/>
</dbReference>
<dbReference type="PANTHER" id="PTHR43323">
    <property type="entry name" value="3-HYDROXY-3-METHYLGLUTARYL COENZYME A SYNTHASE"/>
    <property type="match status" value="1"/>
</dbReference>
<dbReference type="PANTHER" id="PTHR43323:SF2">
    <property type="entry name" value="HYDROXYMETHYLGLUTARYL-COA SYNTHASE"/>
    <property type="match status" value="1"/>
</dbReference>
<dbReference type="Pfam" id="PF08541">
    <property type="entry name" value="ACP_syn_III_C"/>
    <property type="match status" value="1"/>
</dbReference>
<dbReference type="SUPFAM" id="SSF53901">
    <property type="entry name" value="Thiolase-like"/>
    <property type="match status" value="2"/>
</dbReference>